<name>MURA_KLEP7</name>
<proteinExistence type="inferred from homology"/>
<sequence>MDKFRVQGPTRLQGEVTISGAKNAALPILFSALLAEEPVEIQNVPKLKDIDTTMKLLSQLGAKVERNGSVWIDAGPVDVFCAPYDLVKTMRASIWALGPLVARFGQGQVSLPGGCAIGARPVDLHISGLEQLGAEIKLEEGYVKASVSGRLKGAHIVMDKVSVGATVTIMSAATLAEGTTIIENAAREPEIVDTANFLNALGAKITGQGSDRITIEGVQRLGGGVYRVLPDRIETGTFLVAAAISGGKILCRNAQPDTLDAVLAKLRDAGADIETGEDWISLDMHGNRPKAVNVRTAPHPGFPTDMQAQFTLLNLVAEGTGVITETIFENRFMHIPELIRMGAHAEIESNTAICHGVKQLSGAQVMATDLRASASLVLAGCIAEGTTIVDRIYHIDRGYERIEDKLQALGANIQRVKGE</sequence>
<organism>
    <name type="scientific">Klebsiella pneumoniae subsp. pneumoniae (strain ATCC 700721 / MGH 78578)</name>
    <dbReference type="NCBI Taxonomy" id="272620"/>
    <lineage>
        <taxon>Bacteria</taxon>
        <taxon>Pseudomonadati</taxon>
        <taxon>Pseudomonadota</taxon>
        <taxon>Gammaproteobacteria</taxon>
        <taxon>Enterobacterales</taxon>
        <taxon>Enterobacteriaceae</taxon>
        <taxon>Klebsiella/Raoultella group</taxon>
        <taxon>Klebsiella</taxon>
        <taxon>Klebsiella pneumoniae complex</taxon>
    </lineage>
</organism>
<evidence type="ECO:0000255" key="1">
    <source>
        <dbReference type="HAMAP-Rule" id="MF_00111"/>
    </source>
</evidence>
<comment type="function">
    <text evidence="1">Cell wall formation. Adds enolpyruvyl to UDP-N-acetylglucosamine.</text>
</comment>
<comment type="catalytic activity">
    <reaction evidence="1">
        <text>phosphoenolpyruvate + UDP-N-acetyl-alpha-D-glucosamine = UDP-N-acetyl-3-O-(1-carboxyvinyl)-alpha-D-glucosamine + phosphate</text>
        <dbReference type="Rhea" id="RHEA:18681"/>
        <dbReference type="ChEBI" id="CHEBI:43474"/>
        <dbReference type="ChEBI" id="CHEBI:57705"/>
        <dbReference type="ChEBI" id="CHEBI:58702"/>
        <dbReference type="ChEBI" id="CHEBI:68483"/>
        <dbReference type="EC" id="2.5.1.7"/>
    </reaction>
</comment>
<comment type="pathway">
    <text evidence="1">Cell wall biogenesis; peptidoglycan biosynthesis.</text>
</comment>
<comment type="subcellular location">
    <subcellularLocation>
        <location evidence="1">Cytoplasm</location>
    </subcellularLocation>
</comment>
<comment type="similarity">
    <text evidence="1">Belongs to the EPSP synthase family. MurA subfamily.</text>
</comment>
<reference key="1">
    <citation type="submission" date="2006-09" db="EMBL/GenBank/DDBJ databases">
        <authorList>
            <consortium name="The Klebsiella pneumonia Genome Sequencing Project"/>
            <person name="McClelland M."/>
            <person name="Sanderson E.K."/>
            <person name="Spieth J."/>
            <person name="Clifton W.S."/>
            <person name="Latreille P."/>
            <person name="Sabo A."/>
            <person name="Pepin K."/>
            <person name="Bhonagiri V."/>
            <person name="Porwollik S."/>
            <person name="Ali J."/>
            <person name="Wilson R.K."/>
        </authorList>
    </citation>
    <scope>NUCLEOTIDE SEQUENCE [LARGE SCALE GENOMIC DNA]</scope>
    <source>
        <strain>ATCC 700721 / MGH 78578</strain>
    </source>
</reference>
<protein>
    <recommendedName>
        <fullName evidence="1">UDP-N-acetylglucosamine 1-carboxyvinyltransferase</fullName>
        <ecNumber evidence="1">2.5.1.7</ecNumber>
    </recommendedName>
    <alternativeName>
        <fullName evidence="1">Enoylpyruvate transferase</fullName>
    </alternativeName>
    <alternativeName>
        <fullName evidence="1">UDP-N-acetylglucosamine enolpyruvyl transferase</fullName>
        <shortName evidence="1">EPT</shortName>
    </alternativeName>
</protein>
<keyword id="KW-0131">Cell cycle</keyword>
<keyword id="KW-0132">Cell division</keyword>
<keyword id="KW-0133">Cell shape</keyword>
<keyword id="KW-0961">Cell wall biogenesis/degradation</keyword>
<keyword id="KW-0963">Cytoplasm</keyword>
<keyword id="KW-0573">Peptidoglycan synthesis</keyword>
<keyword id="KW-0670">Pyruvate</keyword>
<keyword id="KW-0808">Transferase</keyword>
<gene>
    <name evidence="1" type="primary">murA</name>
    <name type="ordered locus">KPN78578_35680</name>
    <name type="ORF">KPN_03599</name>
</gene>
<accession>A6TEK8</accession>
<feature type="chain" id="PRO_1000023049" description="UDP-N-acetylglucosamine 1-carboxyvinyltransferase">
    <location>
        <begin position="1"/>
        <end position="419"/>
    </location>
</feature>
<feature type="active site" description="Proton donor" evidence="1">
    <location>
        <position position="115"/>
    </location>
</feature>
<feature type="binding site" evidence="1">
    <location>
        <begin position="22"/>
        <end position="23"/>
    </location>
    <ligand>
        <name>phosphoenolpyruvate</name>
        <dbReference type="ChEBI" id="CHEBI:58702"/>
    </ligand>
</feature>
<feature type="binding site" evidence="1">
    <location>
        <position position="91"/>
    </location>
    <ligand>
        <name>UDP-N-acetyl-alpha-D-glucosamine</name>
        <dbReference type="ChEBI" id="CHEBI:57705"/>
    </ligand>
</feature>
<feature type="binding site" evidence="1">
    <location>
        <begin position="120"/>
        <end position="124"/>
    </location>
    <ligand>
        <name>UDP-N-acetyl-alpha-D-glucosamine</name>
        <dbReference type="ChEBI" id="CHEBI:57705"/>
    </ligand>
</feature>
<feature type="binding site" evidence="1">
    <location>
        <begin position="160"/>
        <end position="163"/>
    </location>
    <ligand>
        <name>UDP-N-acetyl-alpha-D-glucosamine</name>
        <dbReference type="ChEBI" id="CHEBI:57705"/>
    </ligand>
</feature>
<feature type="binding site" evidence="1">
    <location>
        <position position="305"/>
    </location>
    <ligand>
        <name>UDP-N-acetyl-alpha-D-glucosamine</name>
        <dbReference type="ChEBI" id="CHEBI:57705"/>
    </ligand>
</feature>
<feature type="binding site" evidence="1">
    <location>
        <position position="327"/>
    </location>
    <ligand>
        <name>UDP-N-acetyl-alpha-D-glucosamine</name>
        <dbReference type="ChEBI" id="CHEBI:57705"/>
    </ligand>
</feature>
<feature type="modified residue" description="2-(S-cysteinyl)pyruvic acid O-phosphothioketal" evidence="1">
    <location>
        <position position="115"/>
    </location>
</feature>
<dbReference type="EC" id="2.5.1.7" evidence="1"/>
<dbReference type="EMBL" id="CP000647">
    <property type="protein sequence ID" value="ABR78992.1"/>
    <property type="molecule type" value="Genomic_DNA"/>
</dbReference>
<dbReference type="RefSeq" id="WP_002918382.1">
    <property type="nucleotide sequence ID" value="NC_009648.1"/>
</dbReference>
<dbReference type="SMR" id="A6TEK8"/>
<dbReference type="STRING" id="272620.KPN_03599"/>
<dbReference type="PaxDb" id="272620-KPN_03599"/>
<dbReference type="EnsemblBacteria" id="ABR78992">
    <property type="protein sequence ID" value="ABR78992"/>
    <property type="gene ID" value="KPN_03599"/>
</dbReference>
<dbReference type="KEGG" id="kpn:KPN_03599"/>
<dbReference type="HOGENOM" id="CLU_027387_0_0_6"/>
<dbReference type="UniPathway" id="UPA00219"/>
<dbReference type="Proteomes" id="UP000000265">
    <property type="component" value="Chromosome"/>
</dbReference>
<dbReference type="GO" id="GO:0005737">
    <property type="term" value="C:cytoplasm"/>
    <property type="evidence" value="ECO:0007669"/>
    <property type="project" value="UniProtKB-SubCell"/>
</dbReference>
<dbReference type="GO" id="GO:0008760">
    <property type="term" value="F:UDP-N-acetylglucosamine 1-carboxyvinyltransferase activity"/>
    <property type="evidence" value="ECO:0007669"/>
    <property type="project" value="UniProtKB-UniRule"/>
</dbReference>
<dbReference type="GO" id="GO:0051301">
    <property type="term" value="P:cell division"/>
    <property type="evidence" value="ECO:0007669"/>
    <property type="project" value="UniProtKB-KW"/>
</dbReference>
<dbReference type="GO" id="GO:0071555">
    <property type="term" value="P:cell wall organization"/>
    <property type="evidence" value="ECO:0007669"/>
    <property type="project" value="UniProtKB-KW"/>
</dbReference>
<dbReference type="GO" id="GO:0009252">
    <property type="term" value="P:peptidoglycan biosynthetic process"/>
    <property type="evidence" value="ECO:0007669"/>
    <property type="project" value="UniProtKB-UniRule"/>
</dbReference>
<dbReference type="GO" id="GO:0008360">
    <property type="term" value="P:regulation of cell shape"/>
    <property type="evidence" value="ECO:0007669"/>
    <property type="project" value="UniProtKB-KW"/>
</dbReference>
<dbReference type="GO" id="GO:0019277">
    <property type="term" value="P:UDP-N-acetylgalactosamine biosynthetic process"/>
    <property type="evidence" value="ECO:0007669"/>
    <property type="project" value="InterPro"/>
</dbReference>
<dbReference type="CDD" id="cd01555">
    <property type="entry name" value="UdpNAET"/>
    <property type="match status" value="1"/>
</dbReference>
<dbReference type="FunFam" id="3.65.10.10:FF:000002">
    <property type="entry name" value="UDP-N-acetylglucosamine 1-carboxyvinyltransferase"/>
    <property type="match status" value="1"/>
</dbReference>
<dbReference type="Gene3D" id="3.65.10.10">
    <property type="entry name" value="Enolpyruvate transferase domain"/>
    <property type="match status" value="2"/>
</dbReference>
<dbReference type="HAMAP" id="MF_00111">
    <property type="entry name" value="MurA"/>
    <property type="match status" value="1"/>
</dbReference>
<dbReference type="InterPro" id="IPR001986">
    <property type="entry name" value="Enolpyruvate_Tfrase_dom"/>
</dbReference>
<dbReference type="InterPro" id="IPR036968">
    <property type="entry name" value="Enolpyruvate_Tfrase_sf"/>
</dbReference>
<dbReference type="InterPro" id="IPR050068">
    <property type="entry name" value="MurA_subfamily"/>
</dbReference>
<dbReference type="InterPro" id="IPR013792">
    <property type="entry name" value="RNA3'P_cycl/enolpyr_Trfase_a/b"/>
</dbReference>
<dbReference type="InterPro" id="IPR005750">
    <property type="entry name" value="UDP_GlcNAc_COvinyl_MurA"/>
</dbReference>
<dbReference type="NCBIfam" id="TIGR01072">
    <property type="entry name" value="murA"/>
    <property type="match status" value="1"/>
</dbReference>
<dbReference type="NCBIfam" id="NF006873">
    <property type="entry name" value="PRK09369.1"/>
    <property type="match status" value="1"/>
</dbReference>
<dbReference type="PANTHER" id="PTHR43783">
    <property type="entry name" value="UDP-N-ACETYLGLUCOSAMINE 1-CARBOXYVINYLTRANSFERASE"/>
    <property type="match status" value="1"/>
</dbReference>
<dbReference type="PANTHER" id="PTHR43783:SF1">
    <property type="entry name" value="UDP-N-ACETYLGLUCOSAMINE 1-CARBOXYVINYLTRANSFERASE"/>
    <property type="match status" value="1"/>
</dbReference>
<dbReference type="Pfam" id="PF00275">
    <property type="entry name" value="EPSP_synthase"/>
    <property type="match status" value="1"/>
</dbReference>
<dbReference type="SUPFAM" id="SSF55205">
    <property type="entry name" value="EPT/RTPC-like"/>
    <property type="match status" value="1"/>
</dbReference>